<dbReference type="EMBL" id="AL596168">
    <property type="protein sequence ID" value="CAC96720.1"/>
    <property type="molecule type" value="Genomic_DNA"/>
</dbReference>
<dbReference type="PIR" id="AH1618">
    <property type="entry name" value="AH1618"/>
</dbReference>
<dbReference type="RefSeq" id="WP_003771850.1">
    <property type="nucleotide sequence ID" value="NC_003212.1"/>
</dbReference>
<dbReference type="SMR" id="Q92BQ8"/>
<dbReference type="STRING" id="272626.gene:17565820"/>
<dbReference type="GeneID" id="93234870"/>
<dbReference type="KEGG" id="lin:lin1489"/>
<dbReference type="eggNOG" id="COG0327">
    <property type="taxonomic scope" value="Bacteria"/>
</dbReference>
<dbReference type="HOGENOM" id="CLU_037423_1_0_9"/>
<dbReference type="OrthoDB" id="9792792at2"/>
<dbReference type="Proteomes" id="UP000002513">
    <property type="component" value="Chromosome"/>
</dbReference>
<dbReference type="GO" id="GO:0005737">
    <property type="term" value="C:cytoplasm"/>
    <property type="evidence" value="ECO:0007669"/>
    <property type="project" value="TreeGrafter"/>
</dbReference>
<dbReference type="GO" id="GO:0046872">
    <property type="term" value="F:metal ion binding"/>
    <property type="evidence" value="ECO:0007669"/>
    <property type="project" value="UniProtKB-KW"/>
</dbReference>
<dbReference type="FunFam" id="3.40.1390.30:FF:000001">
    <property type="entry name" value="GTP cyclohydrolase 1 type 2"/>
    <property type="match status" value="1"/>
</dbReference>
<dbReference type="FunFam" id="3.30.70.120:FF:000006">
    <property type="entry name" value="GTP cyclohydrolase 1 type 2 homolog"/>
    <property type="match status" value="1"/>
</dbReference>
<dbReference type="Gene3D" id="3.30.70.120">
    <property type="match status" value="1"/>
</dbReference>
<dbReference type="Gene3D" id="3.40.1390.30">
    <property type="entry name" value="NIF3 (NGG1p interacting factor 3)-like"/>
    <property type="match status" value="1"/>
</dbReference>
<dbReference type="InterPro" id="IPR002678">
    <property type="entry name" value="DUF34/NIF3"/>
</dbReference>
<dbReference type="InterPro" id="IPR017221">
    <property type="entry name" value="DUF34/NIF3_bac"/>
</dbReference>
<dbReference type="InterPro" id="IPR036069">
    <property type="entry name" value="DUF34/NIF3_sf"/>
</dbReference>
<dbReference type="InterPro" id="IPR015867">
    <property type="entry name" value="N-reg_PII/ATP_PRibTrfase_C"/>
</dbReference>
<dbReference type="NCBIfam" id="TIGR00486">
    <property type="entry name" value="YbgI_SA1388"/>
    <property type="match status" value="1"/>
</dbReference>
<dbReference type="PANTHER" id="PTHR13799:SF14">
    <property type="entry name" value="GTP CYCLOHYDROLASE 1 TYPE 2 HOMOLOG"/>
    <property type="match status" value="1"/>
</dbReference>
<dbReference type="PANTHER" id="PTHR13799">
    <property type="entry name" value="NGG1 INTERACTING FACTOR 3"/>
    <property type="match status" value="1"/>
</dbReference>
<dbReference type="Pfam" id="PF01784">
    <property type="entry name" value="DUF34_NIF3"/>
    <property type="match status" value="1"/>
</dbReference>
<dbReference type="PIRSF" id="PIRSF037489">
    <property type="entry name" value="UCP037489_NIF3_YqfO"/>
    <property type="match status" value="1"/>
</dbReference>
<dbReference type="SUPFAM" id="SSF102705">
    <property type="entry name" value="NIF3 (NGG1p interacting factor 3)-like"/>
    <property type="match status" value="1"/>
</dbReference>
<name>GCH1L_LISIN</name>
<gene>
    <name type="ordered locus">lin1489</name>
</gene>
<sequence length="373" mass="41437">MKVANGYEYTAIMEKIAPKKLAMEGDPIGLQVGDLSKKVRKVMFTLDVLEEVVDEAIEKRVDLIIAHHPFLYRPTQHIDTTTKQGKMIKKLIKHDITVFAAHTNLDIAQGGVNDILADLLHLQDTTMIEETYTEPYCKIAVYVPENELESVRLALVNNGAGQIGTNYTECTFHTTGIGSFKPGTDANPTIGEKETLTSIPEVKIEAIFPQYLTETITKAVKIAHPYEEPAIDVYTLETQTYKEGLGRVGTLPKKISMVSFIDKLKTAFAIDNVRFVGDLKANVQKVAIIGGDGNKFIHQAKATGADVFITGDVYYHTAHDLLAINLPTIDAGHNIEKVMKGYLKNKMEEQAKILDYEAEFIVSEVNTDPFQFC</sequence>
<proteinExistence type="inferred from homology"/>
<reference key="1">
    <citation type="journal article" date="2001" name="Science">
        <title>Comparative genomics of Listeria species.</title>
        <authorList>
            <person name="Glaser P."/>
            <person name="Frangeul L."/>
            <person name="Buchrieser C."/>
            <person name="Rusniok C."/>
            <person name="Amend A."/>
            <person name="Baquero F."/>
            <person name="Berche P."/>
            <person name="Bloecker H."/>
            <person name="Brandt P."/>
            <person name="Chakraborty T."/>
            <person name="Charbit A."/>
            <person name="Chetouani F."/>
            <person name="Couve E."/>
            <person name="de Daruvar A."/>
            <person name="Dehoux P."/>
            <person name="Domann E."/>
            <person name="Dominguez-Bernal G."/>
            <person name="Duchaud E."/>
            <person name="Durant L."/>
            <person name="Dussurget O."/>
            <person name="Entian K.-D."/>
            <person name="Fsihi H."/>
            <person name="Garcia-del Portillo F."/>
            <person name="Garrido P."/>
            <person name="Gautier L."/>
            <person name="Goebel W."/>
            <person name="Gomez-Lopez N."/>
            <person name="Hain T."/>
            <person name="Hauf J."/>
            <person name="Jackson D."/>
            <person name="Jones L.-M."/>
            <person name="Kaerst U."/>
            <person name="Kreft J."/>
            <person name="Kuhn M."/>
            <person name="Kunst F."/>
            <person name="Kurapkat G."/>
            <person name="Madueno E."/>
            <person name="Maitournam A."/>
            <person name="Mata Vicente J."/>
            <person name="Ng E."/>
            <person name="Nedjari H."/>
            <person name="Nordsiek G."/>
            <person name="Novella S."/>
            <person name="de Pablos B."/>
            <person name="Perez-Diaz J.-C."/>
            <person name="Purcell R."/>
            <person name="Remmel B."/>
            <person name="Rose M."/>
            <person name="Schlueter T."/>
            <person name="Simoes N."/>
            <person name="Tierrez A."/>
            <person name="Vazquez-Boland J.-A."/>
            <person name="Voss H."/>
            <person name="Wehland J."/>
            <person name="Cossart P."/>
        </authorList>
    </citation>
    <scope>NUCLEOTIDE SEQUENCE [LARGE SCALE GENOMIC DNA]</scope>
    <source>
        <strain>ATCC BAA-680 / CLIP 11262</strain>
    </source>
</reference>
<protein>
    <recommendedName>
        <fullName>GTP cyclohydrolase 1 type 2 homolog</fullName>
    </recommendedName>
</protein>
<accession>Q92BQ8</accession>
<evidence type="ECO:0000250" key="1">
    <source>
        <dbReference type="UniProtKB" id="P0AFP6"/>
    </source>
</evidence>
<evidence type="ECO:0000305" key="2"/>
<organism>
    <name type="scientific">Listeria innocua serovar 6a (strain ATCC BAA-680 / CLIP 11262)</name>
    <dbReference type="NCBI Taxonomy" id="272626"/>
    <lineage>
        <taxon>Bacteria</taxon>
        <taxon>Bacillati</taxon>
        <taxon>Bacillota</taxon>
        <taxon>Bacilli</taxon>
        <taxon>Bacillales</taxon>
        <taxon>Listeriaceae</taxon>
        <taxon>Listeria</taxon>
    </lineage>
</organism>
<comment type="subunit">
    <text evidence="1">Homohexamer.</text>
</comment>
<comment type="similarity">
    <text evidence="2">Belongs to the GTP cyclohydrolase I type 2/NIF3 family.</text>
</comment>
<keyword id="KW-0479">Metal-binding</keyword>
<feature type="chain" id="PRO_0000147314" description="GTP cyclohydrolase 1 type 2 homolog">
    <location>
        <begin position="1"/>
        <end position="373"/>
    </location>
</feature>
<feature type="binding site" evidence="1">
    <location>
        <position position="67"/>
    </location>
    <ligand>
        <name>a divalent metal cation</name>
        <dbReference type="ChEBI" id="CHEBI:60240"/>
        <label>1</label>
    </ligand>
</feature>
<feature type="binding site" evidence="1">
    <location>
        <position position="68"/>
    </location>
    <ligand>
        <name>a divalent metal cation</name>
        <dbReference type="ChEBI" id="CHEBI:60240"/>
        <label>2</label>
    </ligand>
</feature>
<feature type="binding site" evidence="1">
    <location>
        <position position="106"/>
    </location>
    <ligand>
        <name>a divalent metal cation</name>
        <dbReference type="ChEBI" id="CHEBI:60240"/>
        <label>1</label>
    </ligand>
</feature>
<feature type="binding site" evidence="1">
    <location>
        <position position="333"/>
    </location>
    <ligand>
        <name>a divalent metal cation</name>
        <dbReference type="ChEBI" id="CHEBI:60240"/>
        <label>2</label>
    </ligand>
</feature>
<feature type="binding site" evidence="1">
    <location>
        <position position="336"/>
    </location>
    <ligand>
        <name>a divalent metal cation</name>
        <dbReference type="ChEBI" id="CHEBI:60240"/>
        <label>1</label>
    </ligand>
</feature>
<feature type="binding site" evidence="1">
    <location>
        <position position="336"/>
    </location>
    <ligand>
        <name>a divalent metal cation</name>
        <dbReference type="ChEBI" id="CHEBI:60240"/>
        <label>2</label>
    </ligand>
</feature>